<feature type="chain" id="PRO_0000207340" description="Urocanate hydratase">
    <location>
        <begin position="1"/>
        <end position="558"/>
    </location>
</feature>
<feature type="active site" evidence="1">
    <location>
        <position position="408"/>
    </location>
</feature>
<feature type="binding site" evidence="1">
    <location>
        <begin position="50"/>
        <end position="51"/>
    </location>
    <ligand>
        <name>NAD(+)</name>
        <dbReference type="ChEBI" id="CHEBI:57540"/>
    </ligand>
</feature>
<feature type="binding site" evidence="1">
    <location>
        <position position="128"/>
    </location>
    <ligand>
        <name>NAD(+)</name>
        <dbReference type="ChEBI" id="CHEBI:57540"/>
    </ligand>
</feature>
<feature type="binding site" evidence="1">
    <location>
        <begin position="174"/>
        <end position="176"/>
    </location>
    <ligand>
        <name>NAD(+)</name>
        <dbReference type="ChEBI" id="CHEBI:57540"/>
    </ligand>
</feature>
<feature type="binding site" evidence="1">
    <location>
        <position position="194"/>
    </location>
    <ligand>
        <name>NAD(+)</name>
        <dbReference type="ChEBI" id="CHEBI:57540"/>
    </ligand>
</feature>
<feature type="binding site" evidence="1">
    <location>
        <position position="199"/>
    </location>
    <ligand>
        <name>NAD(+)</name>
        <dbReference type="ChEBI" id="CHEBI:57540"/>
    </ligand>
</feature>
<feature type="binding site" evidence="1">
    <location>
        <begin position="240"/>
        <end position="241"/>
    </location>
    <ligand>
        <name>NAD(+)</name>
        <dbReference type="ChEBI" id="CHEBI:57540"/>
    </ligand>
</feature>
<feature type="binding site" evidence="1">
    <location>
        <begin position="261"/>
        <end position="265"/>
    </location>
    <ligand>
        <name>NAD(+)</name>
        <dbReference type="ChEBI" id="CHEBI:57540"/>
    </ligand>
</feature>
<feature type="binding site" evidence="1">
    <location>
        <begin position="271"/>
        <end position="272"/>
    </location>
    <ligand>
        <name>NAD(+)</name>
        <dbReference type="ChEBI" id="CHEBI:57540"/>
    </ligand>
</feature>
<feature type="binding site" evidence="1">
    <location>
        <position position="320"/>
    </location>
    <ligand>
        <name>NAD(+)</name>
        <dbReference type="ChEBI" id="CHEBI:57540"/>
    </ligand>
</feature>
<feature type="binding site" evidence="1">
    <location>
        <position position="490"/>
    </location>
    <ligand>
        <name>NAD(+)</name>
        <dbReference type="ChEBI" id="CHEBI:57540"/>
    </ligand>
</feature>
<proteinExistence type="inferred from homology"/>
<gene>
    <name evidence="1" type="primary">hutU</name>
    <name type="ordered locus">DR_A0151</name>
</gene>
<sequence length="558" mass="60955">MTTHEPRTVRAPRGPHKTAKGWIQEAAKRMLMNNLDPEVAEHPESLVVYGGRGKAARNWEAFDHIVATLDRLENDETLLVQSGKPVAVLRTHEWAPRVLIANSNLVPHWANWETFDKLDQAGLMMYGQMTAGSWIYIGTQGILQGTYETFAGAAQKHFGGSLKGTITVTAGLGGMGGAQPLAVKLAGGVSITIEIDPTRIRKRLETRYLDEVADNLQDAIARAEGYKAQGVARSIGVQGNAAELVPQLVEMNWTPDLLTDQTSAHDPMWGYIPPVNADEDAGKLRSEHAEEYRQRAYAAMAAHVRAMLELQKRGAVTFDYGNNLRQRAFEAGVEDAFSYPGFVPAFIRDSFCEGRGPFRWVALSGDPQDIYATDKALLELFPEDERLQSWLTYAADQIAFQGLPARICWLGYKERDRAAKLFNDMVKDGRVKAPIVIGRDHLDAGSVASPYRETEAMKDGSDAVSDWPLLNFGVGIASGASWMSFHHGGGVGLGFSQHSGLVIVADGTDEAAKKLSRALTNDPGMGVIRHADAGYDHALDVARERGIDLPSLGIKDHA</sequence>
<reference key="1">
    <citation type="journal article" date="1999" name="Science">
        <title>Genome sequence of the radioresistant bacterium Deinococcus radiodurans R1.</title>
        <authorList>
            <person name="White O."/>
            <person name="Eisen J.A."/>
            <person name="Heidelberg J.F."/>
            <person name="Hickey E.K."/>
            <person name="Peterson J.D."/>
            <person name="Dodson R.J."/>
            <person name="Haft D.H."/>
            <person name="Gwinn M.L."/>
            <person name="Nelson W.C."/>
            <person name="Richardson D.L."/>
            <person name="Moffat K.S."/>
            <person name="Qin H."/>
            <person name="Jiang L."/>
            <person name="Pamphile W."/>
            <person name="Crosby M."/>
            <person name="Shen M."/>
            <person name="Vamathevan J.J."/>
            <person name="Lam P."/>
            <person name="McDonald L.A."/>
            <person name="Utterback T.R."/>
            <person name="Zalewski C."/>
            <person name="Makarova K.S."/>
            <person name="Aravind L."/>
            <person name="Daly M.J."/>
            <person name="Minton K.W."/>
            <person name="Fleischmann R.D."/>
            <person name="Ketchum K.A."/>
            <person name="Nelson K.E."/>
            <person name="Salzberg S.L."/>
            <person name="Smith H.O."/>
            <person name="Venter J.C."/>
            <person name="Fraser C.M."/>
        </authorList>
    </citation>
    <scope>NUCLEOTIDE SEQUENCE [LARGE SCALE GENOMIC DNA]</scope>
    <source>
        <strain>ATCC 13939 / DSM 20539 / JCM 16871 / CCUG 27074 / LMG 4051 / NBRC 15346 / NCIMB 9279 / VKM B-1422 / R1</strain>
    </source>
</reference>
<dbReference type="EC" id="4.2.1.49" evidence="1"/>
<dbReference type="EMBL" id="AE001825">
    <property type="protein sequence ID" value="AAF12213.1"/>
    <property type="molecule type" value="Genomic_DNA"/>
</dbReference>
<dbReference type="PIR" id="B75611">
    <property type="entry name" value="B75611"/>
</dbReference>
<dbReference type="RefSeq" id="NP_285475.1">
    <property type="nucleotide sequence ID" value="NC_001264.1"/>
</dbReference>
<dbReference type="RefSeq" id="WP_010889411.1">
    <property type="nucleotide sequence ID" value="NC_001264.1"/>
</dbReference>
<dbReference type="SMR" id="Q9RZ02"/>
<dbReference type="FunCoup" id="Q9RZ02">
    <property type="interactions" value="62"/>
</dbReference>
<dbReference type="STRING" id="243230.DR_A0151"/>
<dbReference type="PaxDb" id="243230-DR_A0151"/>
<dbReference type="EnsemblBacteria" id="AAF12213">
    <property type="protein sequence ID" value="AAF12213"/>
    <property type="gene ID" value="DR_A0151"/>
</dbReference>
<dbReference type="GeneID" id="69519046"/>
<dbReference type="KEGG" id="dra:DR_A0151"/>
<dbReference type="PATRIC" id="fig|243230.17.peg.3038"/>
<dbReference type="eggNOG" id="COG2987">
    <property type="taxonomic scope" value="Bacteria"/>
</dbReference>
<dbReference type="HOGENOM" id="CLU_018868_0_1_0"/>
<dbReference type="InParanoid" id="Q9RZ02"/>
<dbReference type="OrthoDB" id="9764874at2"/>
<dbReference type="UniPathway" id="UPA00379">
    <property type="reaction ID" value="UER00550"/>
</dbReference>
<dbReference type="Proteomes" id="UP000002524">
    <property type="component" value="Chromosome 2"/>
</dbReference>
<dbReference type="GO" id="GO:0005737">
    <property type="term" value="C:cytoplasm"/>
    <property type="evidence" value="ECO:0007669"/>
    <property type="project" value="UniProtKB-SubCell"/>
</dbReference>
<dbReference type="GO" id="GO:0016153">
    <property type="term" value="F:urocanate hydratase activity"/>
    <property type="evidence" value="ECO:0000318"/>
    <property type="project" value="GO_Central"/>
</dbReference>
<dbReference type="GO" id="GO:0006548">
    <property type="term" value="P:L-histidine catabolic process"/>
    <property type="evidence" value="ECO:0000318"/>
    <property type="project" value="GO_Central"/>
</dbReference>
<dbReference type="GO" id="GO:0019556">
    <property type="term" value="P:L-histidine catabolic process to glutamate and formamide"/>
    <property type="evidence" value="ECO:0007669"/>
    <property type="project" value="UniProtKB-UniPathway"/>
</dbReference>
<dbReference type="GO" id="GO:0019557">
    <property type="term" value="P:L-histidine catabolic process to glutamate and formate"/>
    <property type="evidence" value="ECO:0007669"/>
    <property type="project" value="UniProtKB-UniPathway"/>
</dbReference>
<dbReference type="FunFam" id="3.40.50.10730:FF:000001">
    <property type="entry name" value="Urocanate hydratase"/>
    <property type="match status" value="1"/>
</dbReference>
<dbReference type="Gene3D" id="3.40.50.10730">
    <property type="entry name" value="Urocanase like domains"/>
    <property type="match status" value="1"/>
</dbReference>
<dbReference type="Gene3D" id="3.40.1770.10">
    <property type="entry name" value="Urocanase superfamily"/>
    <property type="match status" value="1"/>
</dbReference>
<dbReference type="HAMAP" id="MF_00577">
    <property type="entry name" value="HutU"/>
    <property type="match status" value="1"/>
</dbReference>
<dbReference type="InterPro" id="IPR055351">
    <property type="entry name" value="Urocanase"/>
</dbReference>
<dbReference type="InterPro" id="IPR023637">
    <property type="entry name" value="Urocanase-like"/>
</dbReference>
<dbReference type="InterPro" id="IPR035401">
    <property type="entry name" value="Urocanase_C"/>
</dbReference>
<dbReference type="InterPro" id="IPR038364">
    <property type="entry name" value="Urocanase_central_sf"/>
</dbReference>
<dbReference type="InterPro" id="IPR023636">
    <property type="entry name" value="Urocanase_CS"/>
</dbReference>
<dbReference type="InterPro" id="IPR035400">
    <property type="entry name" value="Urocanase_N"/>
</dbReference>
<dbReference type="InterPro" id="IPR035085">
    <property type="entry name" value="Urocanase_Rossmann-like"/>
</dbReference>
<dbReference type="InterPro" id="IPR036190">
    <property type="entry name" value="Urocanase_sf"/>
</dbReference>
<dbReference type="NCBIfam" id="TIGR01228">
    <property type="entry name" value="hutU"/>
    <property type="match status" value="1"/>
</dbReference>
<dbReference type="NCBIfam" id="NF003820">
    <property type="entry name" value="PRK05414.1"/>
    <property type="match status" value="1"/>
</dbReference>
<dbReference type="PANTHER" id="PTHR12216">
    <property type="entry name" value="UROCANATE HYDRATASE"/>
    <property type="match status" value="1"/>
</dbReference>
<dbReference type="PANTHER" id="PTHR12216:SF4">
    <property type="entry name" value="UROCANATE HYDRATASE"/>
    <property type="match status" value="1"/>
</dbReference>
<dbReference type="Pfam" id="PF01175">
    <property type="entry name" value="Urocanase"/>
    <property type="match status" value="1"/>
</dbReference>
<dbReference type="Pfam" id="PF17392">
    <property type="entry name" value="Urocanase_C"/>
    <property type="match status" value="1"/>
</dbReference>
<dbReference type="Pfam" id="PF17391">
    <property type="entry name" value="Urocanase_N"/>
    <property type="match status" value="1"/>
</dbReference>
<dbReference type="PIRSF" id="PIRSF001423">
    <property type="entry name" value="Urocanate_hydrat"/>
    <property type="match status" value="1"/>
</dbReference>
<dbReference type="SUPFAM" id="SSF111326">
    <property type="entry name" value="Urocanase"/>
    <property type="match status" value="1"/>
</dbReference>
<dbReference type="PROSITE" id="PS01233">
    <property type="entry name" value="UROCANASE"/>
    <property type="match status" value="1"/>
</dbReference>
<comment type="function">
    <text evidence="1">Catalyzes the conversion of urocanate to 4-imidazolone-5-propionate.</text>
</comment>
<comment type="catalytic activity">
    <reaction evidence="1">
        <text>4-imidazolone-5-propanoate = trans-urocanate + H2O</text>
        <dbReference type="Rhea" id="RHEA:13101"/>
        <dbReference type="ChEBI" id="CHEBI:15377"/>
        <dbReference type="ChEBI" id="CHEBI:17771"/>
        <dbReference type="ChEBI" id="CHEBI:77893"/>
        <dbReference type="EC" id="4.2.1.49"/>
    </reaction>
</comment>
<comment type="cofactor">
    <cofactor evidence="1">
        <name>NAD(+)</name>
        <dbReference type="ChEBI" id="CHEBI:57540"/>
    </cofactor>
    <text evidence="1">Binds 1 NAD(+) per subunit.</text>
</comment>
<comment type="pathway">
    <text evidence="1">Amino-acid degradation; L-histidine degradation into L-glutamate; N-formimidoyl-L-glutamate from L-histidine: step 2/3.</text>
</comment>
<comment type="subcellular location">
    <subcellularLocation>
        <location evidence="1">Cytoplasm</location>
    </subcellularLocation>
</comment>
<comment type="similarity">
    <text evidence="1">Belongs to the urocanase family.</text>
</comment>
<organism>
    <name type="scientific">Deinococcus radiodurans (strain ATCC 13939 / DSM 20539 / JCM 16871 / CCUG 27074 / LMG 4051 / NBRC 15346 / NCIMB 9279 / VKM B-1422 / R1)</name>
    <dbReference type="NCBI Taxonomy" id="243230"/>
    <lineage>
        <taxon>Bacteria</taxon>
        <taxon>Thermotogati</taxon>
        <taxon>Deinococcota</taxon>
        <taxon>Deinococci</taxon>
        <taxon>Deinococcales</taxon>
        <taxon>Deinococcaceae</taxon>
        <taxon>Deinococcus</taxon>
    </lineage>
</organism>
<keyword id="KW-0963">Cytoplasm</keyword>
<keyword id="KW-0369">Histidine metabolism</keyword>
<keyword id="KW-0456">Lyase</keyword>
<keyword id="KW-0520">NAD</keyword>
<keyword id="KW-1185">Reference proteome</keyword>
<name>HUTU_DEIRA</name>
<evidence type="ECO:0000255" key="1">
    <source>
        <dbReference type="HAMAP-Rule" id="MF_00577"/>
    </source>
</evidence>
<protein>
    <recommendedName>
        <fullName evidence="1">Urocanate hydratase</fullName>
        <shortName evidence="1">Urocanase</shortName>
        <ecNumber evidence="1">4.2.1.49</ecNumber>
    </recommendedName>
    <alternativeName>
        <fullName evidence="1">Imidazolonepropionate hydrolase</fullName>
    </alternativeName>
</protein>
<accession>Q9RZ02</accession>